<protein>
    <recommendedName>
        <fullName evidence="1">Chaperonin GroEL</fullName>
        <ecNumber evidence="1">5.6.1.7</ecNumber>
    </recommendedName>
    <alternativeName>
        <fullName evidence="1">60 kDa chaperonin</fullName>
    </alternativeName>
    <alternativeName>
        <fullName evidence="1">Chaperonin-60</fullName>
        <shortName evidence="1">Cpn60</shortName>
    </alternativeName>
</protein>
<feature type="chain" id="PRO_1000130069" description="Chaperonin GroEL">
    <location>
        <begin position="1"/>
        <end position="539"/>
    </location>
</feature>
<feature type="binding site" evidence="1">
    <location>
        <begin position="29"/>
        <end position="32"/>
    </location>
    <ligand>
        <name>ATP</name>
        <dbReference type="ChEBI" id="CHEBI:30616"/>
    </ligand>
</feature>
<feature type="binding site" evidence="1">
    <location>
        <begin position="86"/>
        <end position="90"/>
    </location>
    <ligand>
        <name>ATP</name>
        <dbReference type="ChEBI" id="CHEBI:30616"/>
    </ligand>
</feature>
<feature type="binding site" evidence="1">
    <location>
        <position position="413"/>
    </location>
    <ligand>
        <name>ATP</name>
        <dbReference type="ChEBI" id="CHEBI:30616"/>
    </ligand>
</feature>
<feature type="binding site" evidence="1">
    <location>
        <begin position="479"/>
        <end position="481"/>
    </location>
    <ligand>
        <name>ATP</name>
        <dbReference type="ChEBI" id="CHEBI:30616"/>
    </ligand>
</feature>
<feature type="binding site" evidence="1">
    <location>
        <position position="495"/>
    </location>
    <ligand>
        <name>ATP</name>
        <dbReference type="ChEBI" id="CHEBI:30616"/>
    </ligand>
</feature>
<name>CH60_THEAB</name>
<accession>B7IFA6</accession>
<sequence length="539" mass="58080">MAKMLKFSEEARRALERGVDAVADAVKITLGPKGRNVVIEKSWGSPTITNDGVSIAKEIELEDKFENLGAQLVKEVASKTNDVAGDGTTTATVLAQAMIKEGIKNVTAGANPILVKRGIEKAVAAGVEEIKKISKKLSSTNDIAHVASISANSEEIGKLIAEAMEKVGEDGVITVEDSKSIETYVEFTEGMQFDRGYVSPYFVTDPEKMEVVYNEPFILITDRKLSNIKPLIPILEKVAQTGKPLVIIAEDVEGEALTTLVLNKLKGTLNTVAVKAPGFGDRRKAMLQDIAILTGGIVASEEVGINLEDLTLNDLGRADVVRVKKDETIIVGGHGDQEEIKKRIAQIKAQIEQTTSEYEKETLQERMAKLAGGVAVIKVGAATETELKEKKHRIEDALSATRAAVEEGIVPGGGITLLRARKAVEKVVNELDGDEKIGAKIVYEALIAPINQIAKNAGYDGAIIIHKVLENDDPAYGFDALKGEYCNMFERGIIDPAKVTRSALQNAASIASMLLTTEALVVEKPEPKNNAPMPEMPEY</sequence>
<keyword id="KW-0067">ATP-binding</keyword>
<keyword id="KW-0143">Chaperone</keyword>
<keyword id="KW-0963">Cytoplasm</keyword>
<keyword id="KW-0413">Isomerase</keyword>
<keyword id="KW-0547">Nucleotide-binding</keyword>
<keyword id="KW-1185">Reference proteome</keyword>
<reference key="1">
    <citation type="journal article" date="2009" name="J. Bacteriol.">
        <title>The genome of Thermosipho africanus TCF52B: lateral genetic connections to the Firmicutes and Archaea.</title>
        <authorList>
            <person name="Nesboe C.L."/>
            <person name="Bapteste E."/>
            <person name="Curtis B."/>
            <person name="Dahle H."/>
            <person name="Lopez P."/>
            <person name="Macleod D."/>
            <person name="Dlutek M."/>
            <person name="Bowman S."/>
            <person name="Zhaxybayeva O."/>
            <person name="Birkeland N.-K."/>
            <person name="Doolittle W.F."/>
        </authorList>
    </citation>
    <scope>NUCLEOTIDE SEQUENCE [LARGE SCALE GENOMIC DNA]</scope>
    <source>
        <strain>TCF52B</strain>
    </source>
</reference>
<organism>
    <name type="scientific">Thermosipho africanus (strain TCF52B)</name>
    <dbReference type="NCBI Taxonomy" id="484019"/>
    <lineage>
        <taxon>Bacteria</taxon>
        <taxon>Thermotogati</taxon>
        <taxon>Thermotogota</taxon>
        <taxon>Thermotogae</taxon>
        <taxon>Thermotogales</taxon>
        <taxon>Fervidobacteriaceae</taxon>
        <taxon>Thermosipho</taxon>
    </lineage>
</organism>
<gene>
    <name evidence="1" type="primary">groEL</name>
    <name evidence="1" type="synonym">groL</name>
    <name type="ordered locus">THA_269</name>
</gene>
<proteinExistence type="inferred from homology"/>
<dbReference type="EC" id="5.6.1.7" evidence="1"/>
<dbReference type="EMBL" id="CP001185">
    <property type="protein sequence ID" value="ACJ74770.1"/>
    <property type="molecule type" value="Genomic_DNA"/>
</dbReference>
<dbReference type="RefSeq" id="WP_012579459.1">
    <property type="nucleotide sequence ID" value="NC_011653.1"/>
</dbReference>
<dbReference type="SMR" id="B7IFA6"/>
<dbReference type="STRING" id="484019.THA_269"/>
<dbReference type="KEGG" id="taf:THA_269"/>
<dbReference type="eggNOG" id="COG0459">
    <property type="taxonomic scope" value="Bacteria"/>
</dbReference>
<dbReference type="HOGENOM" id="CLU_016503_3_0_0"/>
<dbReference type="OrthoDB" id="9766614at2"/>
<dbReference type="Proteomes" id="UP000002453">
    <property type="component" value="Chromosome"/>
</dbReference>
<dbReference type="GO" id="GO:0005737">
    <property type="term" value="C:cytoplasm"/>
    <property type="evidence" value="ECO:0007669"/>
    <property type="project" value="UniProtKB-SubCell"/>
</dbReference>
<dbReference type="GO" id="GO:0005524">
    <property type="term" value="F:ATP binding"/>
    <property type="evidence" value="ECO:0007669"/>
    <property type="project" value="UniProtKB-UniRule"/>
</dbReference>
<dbReference type="GO" id="GO:0140662">
    <property type="term" value="F:ATP-dependent protein folding chaperone"/>
    <property type="evidence" value="ECO:0007669"/>
    <property type="project" value="InterPro"/>
</dbReference>
<dbReference type="GO" id="GO:0016853">
    <property type="term" value="F:isomerase activity"/>
    <property type="evidence" value="ECO:0007669"/>
    <property type="project" value="UniProtKB-KW"/>
</dbReference>
<dbReference type="GO" id="GO:0051082">
    <property type="term" value="F:unfolded protein binding"/>
    <property type="evidence" value="ECO:0007669"/>
    <property type="project" value="UniProtKB-UniRule"/>
</dbReference>
<dbReference type="GO" id="GO:0042026">
    <property type="term" value="P:protein refolding"/>
    <property type="evidence" value="ECO:0007669"/>
    <property type="project" value="UniProtKB-UniRule"/>
</dbReference>
<dbReference type="CDD" id="cd03344">
    <property type="entry name" value="GroEL"/>
    <property type="match status" value="1"/>
</dbReference>
<dbReference type="FunFam" id="3.50.7.10:FF:000001">
    <property type="entry name" value="60 kDa chaperonin"/>
    <property type="match status" value="1"/>
</dbReference>
<dbReference type="Gene3D" id="3.50.7.10">
    <property type="entry name" value="GroEL"/>
    <property type="match status" value="1"/>
</dbReference>
<dbReference type="Gene3D" id="1.10.560.10">
    <property type="entry name" value="GroEL-like equatorial domain"/>
    <property type="match status" value="1"/>
</dbReference>
<dbReference type="Gene3D" id="3.30.260.10">
    <property type="entry name" value="TCP-1-like chaperonin intermediate domain"/>
    <property type="match status" value="1"/>
</dbReference>
<dbReference type="HAMAP" id="MF_00600">
    <property type="entry name" value="CH60"/>
    <property type="match status" value="1"/>
</dbReference>
<dbReference type="InterPro" id="IPR018370">
    <property type="entry name" value="Chaperonin_Cpn60_CS"/>
</dbReference>
<dbReference type="InterPro" id="IPR001844">
    <property type="entry name" value="Cpn60/GroEL"/>
</dbReference>
<dbReference type="InterPro" id="IPR002423">
    <property type="entry name" value="Cpn60/GroEL/TCP-1"/>
</dbReference>
<dbReference type="InterPro" id="IPR027409">
    <property type="entry name" value="GroEL-like_apical_dom_sf"/>
</dbReference>
<dbReference type="InterPro" id="IPR027413">
    <property type="entry name" value="GROEL-like_equatorial_sf"/>
</dbReference>
<dbReference type="InterPro" id="IPR027410">
    <property type="entry name" value="TCP-1-like_intermed_sf"/>
</dbReference>
<dbReference type="NCBIfam" id="TIGR02348">
    <property type="entry name" value="GroEL"/>
    <property type="match status" value="1"/>
</dbReference>
<dbReference type="NCBIfam" id="NF000592">
    <property type="entry name" value="PRK00013.1"/>
    <property type="match status" value="1"/>
</dbReference>
<dbReference type="NCBIfam" id="NF009487">
    <property type="entry name" value="PRK12849.1"/>
    <property type="match status" value="1"/>
</dbReference>
<dbReference type="NCBIfam" id="NF009488">
    <property type="entry name" value="PRK12850.1"/>
    <property type="match status" value="1"/>
</dbReference>
<dbReference type="NCBIfam" id="NF009489">
    <property type="entry name" value="PRK12851.1"/>
    <property type="match status" value="1"/>
</dbReference>
<dbReference type="PANTHER" id="PTHR45633">
    <property type="entry name" value="60 KDA HEAT SHOCK PROTEIN, MITOCHONDRIAL"/>
    <property type="match status" value="1"/>
</dbReference>
<dbReference type="Pfam" id="PF00118">
    <property type="entry name" value="Cpn60_TCP1"/>
    <property type="match status" value="1"/>
</dbReference>
<dbReference type="PRINTS" id="PR00298">
    <property type="entry name" value="CHAPERONIN60"/>
</dbReference>
<dbReference type="SUPFAM" id="SSF52029">
    <property type="entry name" value="GroEL apical domain-like"/>
    <property type="match status" value="1"/>
</dbReference>
<dbReference type="SUPFAM" id="SSF48592">
    <property type="entry name" value="GroEL equatorial domain-like"/>
    <property type="match status" value="1"/>
</dbReference>
<dbReference type="SUPFAM" id="SSF54849">
    <property type="entry name" value="GroEL-intermediate domain like"/>
    <property type="match status" value="1"/>
</dbReference>
<dbReference type="PROSITE" id="PS00296">
    <property type="entry name" value="CHAPERONINS_CPN60"/>
    <property type="match status" value="1"/>
</dbReference>
<evidence type="ECO:0000255" key="1">
    <source>
        <dbReference type="HAMAP-Rule" id="MF_00600"/>
    </source>
</evidence>
<comment type="function">
    <text evidence="1">Together with its co-chaperonin GroES, plays an essential role in assisting protein folding. The GroEL-GroES system forms a nano-cage that allows encapsulation of the non-native substrate proteins and provides a physical environment optimized to promote and accelerate protein folding.</text>
</comment>
<comment type="catalytic activity">
    <reaction evidence="1">
        <text>ATP + H2O + a folded polypeptide = ADP + phosphate + an unfolded polypeptide.</text>
        <dbReference type="EC" id="5.6.1.7"/>
    </reaction>
</comment>
<comment type="subunit">
    <text evidence="1">Forms a cylinder of 14 subunits composed of two heptameric rings stacked back-to-back. Interacts with the co-chaperonin GroES.</text>
</comment>
<comment type="subcellular location">
    <subcellularLocation>
        <location evidence="1">Cytoplasm</location>
    </subcellularLocation>
</comment>
<comment type="similarity">
    <text evidence="1">Belongs to the chaperonin (HSP60) family.</text>
</comment>